<comment type="function">
    <text evidence="1">Subunit of malonate decarboxylase, it is an acyl carrier protein to which acetyl and malonyl thioester residues are bound via a 2'-(5''-phosphoribosyl)-3'-dephospho-CoA prosthetic group and turn over during the catalytic mechanism.</text>
</comment>
<comment type="subcellular location">
    <subcellularLocation>
        <location evidence="1">Cytoplasm</location>
    </subcellularLocation>
</comment>
<comment type="PTM">
    <text evidence="1">Covalently binds the prosthetic group of malonate decarboxylase.</text>
</comment>
<comment type="similarity">
    <text evidence="1">Belongs to the MdcC family.</text>
</comment>
<organism>
    <name type="scientific">Pseudomonas aeruginosa (strain UCBPP-PA14)</name>
    <dbReference type="NCBI Taxonomy" id="208963"/>
    <lineage>
        <taxon>Bacteria</taxon>
        <taxon>Pseudomonadati</taxon>
        <taxon>Pseudomonadota</taxon>
        <taxon>Gammaproteobacteria</taxon>
        <taxon>Pseudomonadales</taxon>
        <taxon>Pseudomonadaceae</taxon>
        <taxon>Pseudomonas</taxon>
    </lineage>
</organism>
<sequence>METLTFEFPAGAPARGRALAGCVGSGDLEVLLEPAAGGALSIQVVTSVNGSGPRWQQLFARVFAASTAPAASIRIHDFGATPGVVRLRLEQALEEAGHD</sequence>
<name>MDCC_PSEAB</name>
<proteinExistence type="inferred from homology"/>
<protein>
    <recommendedName>
        <fullName evidence="1">Malonate decarboxylase acyl carrier protein</fullName>
    </recommendedName>
    <alternativeName>
        <fullName evidence="1">Malonate decarboxylase subunit delta</fullName>
    </alternativeName>
</protein>
<feature type="chain" id="PRO_0000303109" description="Malonate decarboxylase acyl carrier protein">
    <location>
        <begin position="1"/>
        <end position="99"/>
    </location>
</feature>
<feature type="modified residue" description="O-(phosphoribosyl dephospho-coenzyme A)serine" evidence="1">
    <location>
        <position position="25"/>
    </location>
</feature>
<evidence type="ECO:0000255" key="1">
    <source>
        <dbReference type="HAMAP-Rule" id="MF_00710"/>
    </source>
</evidence>
<accession>Q02UM5</accession>
<reference key="1">
    <citation type="journal article" date="2006" name="Genome Biol.">
        <title>Genomic analysis reveals that Pseudomonas aeruginosa virulence is combinatorial.</title>
        <authorList>
            <person name="Lee D.G."/>
            <person name="Urbach J.M."/>
            <person name="Wu G."/>
            <person name="Liberati N.T."/>
            <person name="Feinbaum R.L."/>
            <person name="Miyata S."/>
            <person name="Diggins L.T."/>
            <person name="He J."/>
            <person name="Saucier M."/>
            <person name="Deziel E."/>
            <person name="Friedman L."/>
            <person name="Li L."/>
            <person name="Grills G."/>
            <person name="Montgomery K."/>
            <person name="Kucherlapati R."/>
            <person name="Rahme L.G."/>
            <person name="Ausubel F.M."/>
        </authorList>
    </citation>
    <scope>NUCLEOTIDE SEQUENCE [LARGE SCALE GENOMIC DNA]</scope>
    <source>
        <strain>UCBPP-PA14</strain>
    </source>
</reference>
<keyword id="KW-0963">Cytoplasm</keyword>
<keyword id="KW-0597">Phosphoprotein</keyword>
<gene>
    <name evidence="1" type="primary">mdcC</name>
    <name type="ordered locus">PA14_02570</name>
</gene>
<dbReference type="EMBL" id="CP000438">
    <property type="protein sequence ID" value="ABJ15159.1"/>
    <property type="molecule type" value="Genomic_DNA"/>
</dbReference>
<dbReference type="RefSeq" id="WP_003084001.1">
    <property type="nucleotide sequence ID" value="NZ_CP034244.1"/>
</dbReference>
<dbReference type="SMR" id="Q02UM5"/>
<dbReference type="KEGG" id="pau:PA14_02570"/>
<dbReference type="PseudoCAP" id="PA14_02570"/>
<dbReference type="HOGENOM" id="CLU_173135_1_0_6"/>
<dbReference type="BioCyc" id="PAER208963:G1G74-212-MONOMER"/>
<dbReference type="Proteomes" id="UP000000653">
    <property type="component" value="Chromosome"/>
</dbReference>
<dbReference type="GO" id="GO:0005737">
    <property type="term" value="C:cytoplasm"/>
    <property type="evidence" value="ECO:0007669"/>
    <property type="project" value="UniProtKB-SubCell"/>
</dbReference>
<dbReference type="GO" id="GO:0000036">
    <property type="term" value="F:acyl carrier activity"/>
    <property type="evidence" value="ECO:0007669"/>
    <property type="project" value="UniProtKB-UniRule"/>
</dbReference>
<dbReference type="HAMAP" id="MF_00710">
    <property type="entry name" value="Malonate_deCO2ase_dsu"/>
    <property type="match status" value="1"/>
</dbReference>
<dbReference type="InterPro" id="IPR023439">
    <property type="entry name" value="Mal_deCO2ase/Cit_lyase_ACP"/>
</dbReference>
<dbReference type="InterPro" id="IPR009662">
    <property type="entry name" value="Malonate_deCO2ase_dsu"/>
</dbReference>
<dbReference type="NCBIfam" id="TIGR03130">
    <property type="entry name" value="malonate_delta"/>
    <property type="match status" value="1"/>
</dbReference>
<dbReference type="NCBIfam" id="NF002293">
    <property type="entry name" value="PRK01220.1"/>
    <property type="match status" value="1"/>
</dbReference>
<dbReference type="Pfam" id="PF06857">
    <property type="entry name" value="ACP"/>
    <property type="match status" value="1"/>
</dbReference>